<dbReference type="EMBL" id="AY653733">
    <property type="protein sequence ID" value="AAV51001.1"/>
    <property type="molecule type" value="Genomic_DNA"/>
</dbReference>
<dbReference type="SMR" id="Q5UNZ7"/>
<dbReference type="KEGG" id="vg:9925397"/>
<dbReference type="Proteomes" id="UP000001134">
    <property type="component" value="Genome"/>
</dbReference>
<proteinExistence type="predicted"/>
<keyword id="KW-1185">Reference proteome</keyword>
<reference key="1">
    <citation type="journal article" date="2004" name="Science">
        <title>The 1.2-megabase genome sequence of Mimivirus.</title>
        <authorList>
            <person name="Raoult D."/>
            <person name="Audic S."/>
            <person name="Robert C."/>
            <person name="Abergel C."/>
            <person name="Renesto P."/>
            <person name="Ogata H."/>
            <person name="La Scola B."/>
            <person name="Susan M."/>
            <person name="Claverie J.-M."/>
        </authorList>
    </citation>
    <scope>NUCLEOTIDE SEQUENCE [LARGE SCALE GENOMIC DNA]</scope>
    <source>
        <strain>Rowbotham-Bradford</strain>
    </source>
</reference>
<feature type="chain" id="PRO_0000071341" description="Uncharacterized protein R741">
    <location>
        <begin position="1"/>
        <end position="182"/>
    </location>
</feature>
<organism>
    <name type="scientific">Acanthamoeba polyphaga mimivirus</name>
    <name type="common">APMV</name>
    <dbReference type="NCBI Taxonomy" id="212035"/>
    <lineage>
        <taxon>Viruses</taxon>
        <taxon>Varidnaviria</taxon>
        <taxon>Bamfordvirae</taxon>
        <taxon>Nucleocytoviricota</taxon>
        <taxon>Megaviricetes</taxon>
        <taxon>Imitervirales</taxon>
        <taxon>Mimiviridae</taxon>
        <taxon>Megamimivirinae</taxon>
        <taxon>Mimivirus</taxon>
        <taxon>Mimivirus bradfordmassiliense</taxon>
    </lineage>
</organism>
<accession>Q5UNZ7</accession>
<gene>
    <name type="ordered locus">MIMI_R741</name>
</gene>
<name>YR741_MIMIV</name>
<sequence length="182" mass="22594">MVLKNIWRKNKIFDKENLSRELKCYKYANKFIKKRSNKIERKLSQNIFDDIIEKQTKDNRSGNLAVIFVESFHETELHVCQLNQESESIGQLIKEFNRIKYHIENNVDFIEEFEKHLYEMDRYDEYIKQYTFNKDSVLKYIEDNIELIMREKYEWQKQLEYFDMKLKLVRYVLYHFPKIYAQ</sequence>
<organismHost>
    <name type="scientific">Acanthamoeba polyphaga</name>
    <name type="common">Amoeba</name>
    <dbReference type="NCBI Taxonomy" id="5757"/>
</organismHost>
<protein>
    <recommendedName>
        <fullName>Uncharacterized protein R741</fullName>
    </recommendedName>
</protein>